<organism>
    <name type="scientific">Candida albicans (strain SC5314 / ATCC MYA-2876)</name>
    <name type="common">Yeast</name>
    <dbReference type="NCBI Taxonomy" id="237561"/>
    <lineage>
        <taxon>Eukaryota</taxon>
        <taxon>Fungi</taxon>
        <taxon>Dikarya</taxon>
        <taxon>Ascomycota</taxon>
        <taxon>Saccharomycotina</taxon>
        <taxon>Pichiomycetes</taxon>
        <taxon>Debaryomycetaceae</taxon>
        <taxon>Candida/Lodderomyces clade</taxon>
        <taxon>Candida</taxon>
    </lineage>
</organism>
<protein>
    <recommendedName>
        <fullName evidence="1">Sulfate adenylyltransferase</fullName>
        <ecNumber evidence="1">2.7.7.4</ecNumber>
    </recommendedName>
    <alternativeName>
        <fullName evidence="1">ATP-sulfurylase</fullName>
    </alternativeName>
    <alternativeName>
        <fullName evidence="1">Sulfate adenylate transferase</fullName>
        <shortName evidence="1">SAT</shortName>
    </alternativeName>
</protein>
<name>MET3_CANAL</name>
<proteinExistence type="inferred from homology"/>
<reference key="1">
    <citation type="journal article" date="1999" name="Mol. Microbiol.">
        <title>The MET3 promoter: a new tool for Candida albicans molecular genetics.</title>
        <authorList>
            <person name="Care R.S."/>
            <person name="Trevethick J."/>
            <person name="Binley K.M."/>
            <person name="Sudbery P.E."/>
        </authorList>
    </citation>
    <scope>NUCLEOTIDE SEQUENCE [GENOMIC DNA]</scope>
    <source>
        <strain>124</strain>
    </source>
</reference>
<reference key="2">
    <citation type="journal article" date="2004" name="Proc. Natl. Acad. Sci. U.S.A.">
        <title>The diploid genome sequence of Candida albicans.</title>
        <authorList>
            <person name="Jones T."/>
            <person name="Federspiel N.A."/>
            <person name="Chibana H."/>
            <person name="Dungan J."/>
            <person name="Kalman S."/>
            <person name="Magee B.B."/>
            <person name="Newport G."/>
            <person name="Thorstenson Y.R."/>
            <person name="Agabian N."/>
            <person name="Magee P.T."/>
            <person name="Davis R.W."/>
            <person name="Scherer S."/>
        </authorList>
    </citation>
    <scope>NUCLEOTIDE SEQUENCE [LARGE SCALE GENOMIC DNA]</scope>
    <source>
        <strain>SC5314 / ATCC MYA-2876</strain>
    </source>
</reference>
<reference key="3">
    <citation type="journal article" date="2007" name="Genome Biol.">
        <title>Assembly of the Candida albicans genome into sixteen supercontigs aligned on the eight chromosomes.</title>
        <authorList>
            <person name="van het Hoog M."/>
            <person name="Rast T.J."/>
            <person name="Martchenko M."/>
            <person name="Grindle S."/>
            <person name="Dignard D."/>
            <person name="Hogues H."/>
            <person name="Cuomo C."/>
            <person name="Berriman M."/>
            <person name="Scherer S."/>
            <person name="Magee B.B."/>
            <person name="Whiteway M."/>
            <person name="Chibana H."/>
            <person name="Nantel A."/>
            <person name="Magee P.T."/>
        </authorList>
    </citation>
    <scope>GENOME REANNOTATION</scope>
    <source>
        <strain>SC5314 / ATCC MYA-2876</strain>
    </source>
</reference>
<reference key="4">
    <citation type="journal article" date="2013" name="Genome Biol.">
        <title>Assembly of a phased diploid Candida albicans genome facilitates allele-specific measurements and provides a simple model for repeat and indel structure.</title>
        <authorList>
            <person name="Muzzey D."/>
            <person name="Schwartz K."/>
            <person name="Weissman J.S."/>
            <person name="Sherlock G."/>
        </authorList>
    </citation>
    <scope>NUCLEOTIDE SEQUENCE [LARGE SCALE GENOMIC DNA]</scope>
    <scope>GENOME REANNOTATION</scope>
    <source>
        <strain>SC5314 / ATCC MYA-2876</strain>
    </source>
</reference>
<gene>
    <name evidence="1" type="primary">MET3</name>
    <name type="ordered locus">CAALFM_C113870WA</name>
    <name type="ORF">CaO19.12492</name>
    <name type="ORF">CaO19.5025</name>
</gene>
<keyword id="KW-0028">Amino-acid biosynthesis</keyword>
<keyword id="KW-0067">ATP-binding</keyword>
<keyword id="KW-0198">Cysteine biosynthesis</keyword>
<keyword id="KW-0963">Cytoplasm</keyword>
<keyword id="KW-0486">Methionine biosynthesis</keyword>
<keyword id="KW-0547">Nucleotide-binding</keyword>
<keyword id="KW-0548">Nucleotidyltransferase</keyword>
<keyword id="KW-1185">Reference proteome</keyword>
<keyword id="KW-0808">Transferase</keyword>
<feature type="chain" id="PRO_0000105952" description="Sulfate adenylyltransferase">
    <location>
        <begin position="1"/>
        <end position="527"/>
    </location>
</feature>
<feature type="region of interest" description="N-terminal" evidence="1">
    <location>
        <begin position="1"/>
        <end position="176"/>
    </location>
</feature>
<feature type="region of interest" description="Catalytic" evidence="1">
    <location>
        <begin position="177"/>
        <end position="406"/>
    </location>
</feature>
<feature type="region of interest" description="Required for oligomerization; adenylyl-sulfate kinase-like" evidence="1">
    <location>
        <begin position="407"/>
        <end position="527"/>
    </location>
</feature>
<feature type="active site" evidence="1">
    <location>
        <position position="207"/>
    </location>
</feature>
<feature type="active site" evidence="1">
    <location>
        <position position="208"/>
    </location>
</feature>
<feature type="active site" evidence="1">
    <location>
        <position position="209"/>
    </location>
</feature>
<feature type="binding site" evidence="1">
    <location>
        <begin position="206"/>
        <end position="209"/>
    </location>
    <ligand>
        <name>ATP</name>
        <dbReference type="ChEBI" id="CHEBI:30616"/>
    </ligand>
</feature>
<feature type="binding site" evidence="1">
    <location>
        <position position="206"/>
    </location>
    <ligand>
        <name>sulfate</name>
        <dbReference type="ChEBI" id="CHEBI:16189"/>
    </ligand>
</feature>
<feature type="binding site" evidence="1">
    <location>
        <position position="208"/>
    </location>
    <ligand>
        <name>sulfate</name>
        <dbReference type="ChEBI" id="CHEBI:16189"/>
    </ligand>
</feature>
<feature type="binding site" evidence="1">
    <location>
        <begin position="302"/>
        <end position="305"/>
    </location>
    <ligand>
        <name>ATP</name>
        <dbReference type="ChEBI" id="CHEBI:30616"/>
    </ligand>
</feature>
<feature type="binding site" evidence="1">
    <location>
        <position position="306"/>
    </location>
    <ligand>
        <name>sulfate</name>
        <dbReference type="ChEBI" id="CHEBI:16189"/>
    </ligand>
</feature>
<feature type="binding site" evidence="1">
    <location>
        <position position="344"/>
    </location>
    <ligand>
        <name>ATP</name>
        <dbReference type="ChEBI" id="CHEBI:30616"/>
    </ligand>
</feature>
<feature type="site" description="Transition state stabilizer" evidence="1">
    <location>
        <position position="212"/>
    </location>
</feature>
<feature type="site" description="Transition state stabilizer" evidence="1">
    <location>
        <position position="215"/>
    </location>
</feature>
<feature type="site" description="Induces change in substrate recognition on ATP binding" evidence="1">
    <location>
        <position position="341"/>
    </location>
</feature>
<feature type="sequence conflict" description="In Ref. 1; AAD45374." evidence="2" ref="1">
    <original>E</original>
    <variation>K</variation>
    <location>
        <position position="139"/>
    </location>
</feature>
<feature type="sequence conflict" description="In Ref. 1; AAD45374." evidence="2" ref="1">
    <original>S</original>
    <variation>P</variation>
    <location>
        <position position="146"/>
    </location>
</feature>
<feature type="sequence conflict" description="In Ref. 1; AAD45374." evidence="2" ref="1">
    <original>H</original>
    <variation>D</variation>
    <location>
        <position position="446"/>
    </location>
</feature>
<sequence length="527" mass="58859">MPIPTPHGGKLRDLVIRDAPLKQQLLQEAKTLPALTLTARQLCDLELILNGGFSPLTGFLNQEDYNSVVNDLRLSSVKNESNGKGLLWPIPITLDVDETTSKKHSVGDRIVLIDLRDETPLAILTIESIYKPDKKLEAEKVFRGDSEHPANKYLLETAGDYYIGGELQGINYPKHYDYVDARKTPTELRQEFEKLGWAQENIVAFQTRNPMHRAHRELTIRAAQDIGDKAHILIHPVVGLTKPGDIDHHTRVKVYKQILTKFPDGLATLSLLPLAMRMGGDREALWHALIRTNYGVDHFIVGRDHAGPGKNSQGVDFYGPYDAQELLAKYDDELNIKIVPFRMVTYLPDEDRYAPIDTIDVKKVRTANISGTELRNKLKTGDEIPSWFSYPEVVKILRETNPPRSKQGFAILIDNSHKLGDYLSFALQSTLNQFSGERRITKLNAHQANDSFIVGELVKAGSGVIVPTTNPTPIVNVVGNGNSLVVNQKNNNNQASGNADGEFNLSNDDLVAVVDEIVNYLKDQGFY</sequence>
<comment type="function">
    <text evidence="1">Catalyzes the first intracellular reaction of sulfate assimilation, forming adenosine-5'-phosphosulfate (APS) from inorganic sulfate and ATP. Plays an important role in sulfate activation as a component of the biosynthesis pathway of sulfur-containing amino acids.</text>
</comment>
<comment type="catalytic activity">
    <reaction evidence="1">
        <text>sulfate + ATP + H(+) = adenosine 5'-phosphosulfate + diphosphate</text>
        <dbReference type="Rhea" id="RHEA:18133"/>
        <dbReference type="ChEBI" id="CHEBI:15378"/>
        <dbReference type="ChEBI" id="CHEBI:16189"/>
        <dbReference type="ChEBI" id="CHEBI:30616"/>
        <dbReference type="ChEBI" id="CHEBI:33019"/>
        <dbReference type="ChEBI" id="CHEBI:58243"/>
        <dbReference type="EC" id="2.7.7.4"/>
    </reaction>
</comment>
<comment type="pathway">
    <text evidence="1">Sulfur metabolism; hydrogen sulfide biosynthesis; sulfite from sulfate: step 1/3.</text>
</comment>
<comment type="subunit">
    <text evidence="1">Homohexamer. Dimer of trimers.</text>
</comment>
<comment type="subcellular location">
    <subcellularLocation>
        <location evidence="1">Cytoplasm</location>
    </subcellularLocation>
</comment>
<comment type="domain">
    <text evidence="1">The oligomerization domain is distantly related to APS kinases, but it is not functional and does not bind APS. It is required for oligomerization of the enzyme, although the oligomerization state has no effect on the catalytic activity of the enzyme.</text>
</comment>
<comment type="similarity">
    <text evidence="1">Belongs to the sulfate adenylyltransferase family.</text>
</comment>
<dbReference type="EC" id="2.7.7.4" evidence="1"/>
<dbReference type="EMBL" id="AF164103">
    <property type="protein sequence ID" value="AAD45374.1"/>
    <property type="molecule type" value="Genomic_DNA"/>
</dbReference>
<dbReference type="EMBL" id="CP017623">
    <property type="protein sequence ID" value="AOW26989.1"/>
    <property type="molecule type" value="Genomic_DNA"/>
</dbReference>
<dbReference type="RefSeq" id="XP_722228.1">
    <property type="nucleotide sequence ID" value="XM_717135.1"/>
</dbReference>
<dbReference type="SMR" id="Q9Y872"/>
<dbReference type="BioGRID" id="1219192">
    <property type="interactions" value="2"/>
</dbReference>
<dbReference type="FunCoup" id="Q9Y872">
    <property type="interactions" value="591"/>
</dbReference>
<dbReference type="STRING" id="237561.Q9Y872"/>
<dbReference type="EnsemblFungi" id="C1_13870W_A-T">
    <property type="protein sequence ID" value="C1_13870W_A-T-p1"/>
    <property type="gene ID" value="C1_13870W_A"/>
</dbReference>
<dbReference type="GeneID" id="3636132"/>
<dbReference type="KEGG" id="cal:CAALFM_C113870WA"/>
<dbReference type="CGD" id="CAL0000178072">
    <property type="gene designation" value="MET3"/>
</dbReference>
<dbReference type="VEuPathDB" id="FungiDB:C1_13870W_A"/>
<dbReference type="eggNOG" id="KOG0636">
    <property type="taxonomic scope" value="Eukaryota"/>
</dbReference>
<dbReference type="HOGENOM" id="CLU_022950_1_0_1"/>
<dbReference type="InParanoid" id="Q9Y872"/>
<dbReference type="OMA" id="MEMRYAG"/>
<dbReference type="OrthoDB" id="468at2759"/>
<dbReference type="UniPathway" id="UPA00140">
    <property type="reaction ID" value="UER00204"/>
</dbReference>
<dbReference type="PRO" id="PR:Q9Y872"/>
<dbReference type="Proteomes" id="UP000000559">
    <property type="component" value="Chromosome 1"/>
</dbReference>
<dbReference type="GO" id="GO:0005737">
    <property type="term" value="C:cytoplasm"/>
    <property type="evidence" value="ECO:0007669"/>
    <property type="project" value="UniProtKB-SubCell"/>
</dbReference>
<dbReference type="GO" id="GO:0005524">
    <property type="term" value="F:ATP binding"/>
    <property type="evidence" value="ECO:0007669"/>
    <property type="project" value="UniProtKB-KW"/>
</dbReference>
<dbReference type="GO" id="GO:0004781">
    <property type="term" value="F:sulfate adenylyltransferase (ATP) activity"/>
    <property type="evidence" value="ECO:0000318"/>
    <property type="project" value="GO_Central"/>
</dbReference>
<dbReference type="GO" id="GO:0019344">
    <property type="term" value="P:cysteine biosynthetic process"/>
    <property type="evidence" value="ECO:0007669"/>
    <property type="project" value="UniProtKB-KW"/>
</dbReference>
<dbReference type="GO" id="GO:0070814">
    <property type="term" value="P:hydrogen sulfide biosynthetic process"/>
    <property type="evidence" value="ECO:0007669"/>
    <property type="project" value="UniProtKB-UniRule"/>
</dbReference>
<dbReference type="GO" id="GO:0009086">
    <property type="term" value="P:methionine biosynthetic process"/>
    <property type="evidence" value="ECO:0007669"/>
    <property type="project" value="UniProtKB-KW"/>
</dbReference>
<dbReference type="GO" id="GO:0019379">
    <property type="term" value="P:sulfate assimilation, phosphoadenylyl sulfate reduction by phosphoadenylyl-sulfate reductase (thioredoxin)"/>
    <property type="evidence" value="ECO:0000318"/>
    <property type="project" value="GO_Central"/>
</dbReference>
<dbReference type="CDD" id="cd00517">
    <property type="entry name" value="ATPS"/>
    <property type="match status" value="1"/>
</dbReference>
<dbReference type="FunFam" id="3.40.50.300:FF:004457">
    <property type="entry name" value="Sulfate adenylyltransferase"/>
    <property type="match status" value="1"/>
</dbReference>
<dbReference type="FunFam" id="3.40.50.620:FF:000052">
    <property type="entry name" value="Sulfate adenylyltransferase"/>
    <property type="match status" value="1"/>
</dbReference>
<dbReference type="Gene3D" id="3.40.50.620">
    <property type="entry name" value="HUPs"/>
    <property type="match status" value="1"/>
</dbReference>
<dbReference type="Gene3D" id="3.40.50.300">
    <property type="entry name" value="P-loop containing nucleotide triphosphate hydrolases"/>
    <property type="match status" value="1"/>
</dbReference>
<dbReference type="Gene3D" id="3.10.400.10">
    <property type="entry name" value="Sulfate adenylyltransferase"/>
    <property type="match status" value="1"/>
</dbReference>
<dbReference type="HAMAP" id="MF_03106">
    <property type="entry name" value="Sulf_adenylyltr_euk"/>
    <property type="match status" value="1"/>
</dbReference>
<dbReference type="InterPro" id="IPR025980">
    <property type="entry name" value="ATP-Sase_PUA-like_dom"/>
</dbReference>
<dbReference type="InterPro" id="IPR027417">
    <property type="entry name" value="P-loop_NTPase"/>
</dbReference>
<dbReference type="InterPro" id="IPR015947">
    <property type="entry name" value="PUA-like_sf"/>
</dbReference>
<dbReference type="InterPro" id="IPR014729">
    <property type="entry name" value="Rossmann-like_a/b/a_fold"/>
</dbReference>
<dbReference type="InterPro" id="IPR027535">
    <property type="entry name" value="Sulf_adenylyltr_euk"/>
</dbReference>
<dbReference type="InterPro" id="IPR050512">
    <property type="entry name" value="Sulf_AdTrans/APS_kinase"/>
</dbReference>
<dbReference type="InterPro" id="IPR024951">
    <property type="entry name" value="Sulfurylase_cat_dom"/>
</dbReference>
<dbReference type="InterPro" id="IPR002650">
    <property type="entry name" value="Sulphate_adenylyltransferase"/>
</dbReference>
<dbReference type="NCBIfam" id="TIGR00339">
    <property type="entry name" value="sopT"/>
    <property type="match status" value="1"/>
</dbReference>
<dbReference type="PANTHER" id="PTHR42700">
    <property type="entry name" value="SULFATE ADENYLYLTRANSFERASE"/>
    <property type="match status" value="1"/>
</dbReference>
<dbReference type="PANTHER" id="PTHR42700:SF1">
    <property type="entry name" value="SULFATE ADENYLYLTRANSFERASE"/>
    <property type="match status" value="1"/>
</dbReference>
<dbReference type="Pfam" id="PF01747">
    <property type="entry name" value="ATP-sulfurylase"/>
    <property type="match status" value="1"/>
</dbReference>
<dbReference type="Pfam" id="PF14306">
    <property type="entry name" value="PUA_2"/>
    <property type="match status" value="1"/>
</dbReference>
<dbReference type="SUPFAM" id="SSF52374">
    <property type="entry name" value="Nucleotidylyl transferase"/>
    <property type="match status" value="1"/>
</dbReference>
<dbReference type="SUPFAM" id="SSF52540">
    <property type="entry name" value="P-loop containing nucleoside triphosphate hydrolases"/>
    <property type="match status" value="1"/>
</dbReference>
<dbReference type="SUPFAM" id="SSF88697">
    <property type="entry name" value="PUA domain-like"/>
    <property type="match status" value="1"/>
</dbReference>
<evidence type="ECO:0000255" key="1">
    <source>
        <dbReference type="HAMAP-Rule" id="MF_03106"/>
    </source>
</evidence>
<evidence type="ECO:0000305" key="2"/>
<accession>Q9Y872</accession>
<accession>A0A1D8PFS8</accession>
<accession>Q5AKV2</accession>